<evidence type="ECO:0000255" key="1">
    <source>
        <dbReference type="HAMAP-Rule" id="MF_00086"/>
    </source>
</evidence>
<keyword id="KW-0067">ATP-binding</keyword>
<keyword id="KW-0963">Cytoplasm</keyword>
<keyword id="KW-0460">Magnesium</keyword>
<keyword id="KW-0479">Metal-binding</keyword>
<keyword id="KW-0547">Nucleotide-binding</keyword>
<keyword id="KW-0554">One-carbon metabolism</keyword>
<keyword id="KW-0630">Potassium</keyword>
<keyword id="KW-0808">Transferase</keyword>
<proteinExistence type="inferred from homology"/>
<protein>
    <recommendedName>
        <fullName evidence="1">S-adenosylmethionine synthase</fullName>
        <shortName evidence="1">AdoMet synthase</shortName>
        <ecNumber evidence="1">2.5.1.6</ecNumber>
    </recommendedName>
    <alternativeName>
        <fullName evidence="1">MAT</fullName>
    </alternativeName>
    <alternativeName>
        <fullName evidence="1">Methionine adenosyltransferase</fullName>
    </alternativeName>
</protein>
<organism>
    <name type="scientific">Bordetella petrii (strain ATCC BAA-461 / DSM 12804 / CCUG 43448)</name>
    <dbReference type="NCBI Taxonomy" id="340100"/>
    <lineage>
        <taxon>Bacteria</taxon>
        <taxon>Pseudomonadati</taxon>
        <taxon>Pseudomonadota</taxon>
        <taxon>Betaproteobacteria</taxon>
        <taxon>Burkholderiales</taxon>
        <taxon>Alcaligenaceae</taxon>
        <taxon>Bordetella</taxon>
    </lineage>
</organism>
<reference key="1">
    <citation type="journal article" date="2008" name="BMC Genomics">
        <title>The missing link: Bordetella petrii is endowed with both the metabolic versatility of environmental bacteria and virulence traits of pathogenic Bordetellae.</title>
        <authorList>
            <person name="Gross R."/>
            <person name="Guzman C.A."/>
            <person name="Sebaihia M."/>
            <person name="Martin dos Santos V.A.P."/>
            <person name="Pieper D.H."/>
            <person name="Koebnik R."/>
            <person name="Lechner M."/>
            <person name="Bartels D."/>
            <person name="Buhrmester J."/>
            <person name="Choudhuri J.V."/>
            <person name="Ebensen T."/>
            <person name="Gaigalat L."/>
            <person name="Herrmann S."/>
            <person name="Khachane A.N."/>
            <person name="Larisch C."/>
            <person name="Link S."/>
            <person name="Linke B."/>
            <person name="Meyer F."/>
            <person name="Mormann S."/>
            <person name="Nakunst D."/>
            <person name="Rueckert C."/>
            <person name="Schneiker-Bekel S."/>
            <person name="Schulze K."/>
            <person name="Voerholter F.-J."/>
            <person name="Yevsa T."/>
            <person name="Engle J.T."/>
            <person name="Goldman W.E."/>
            <person name="Puehler A."/>
            <person name="Goebel U.B."/>
            <person name="Goesmann A."/>
            <person name="Bloecker H."/>
            <person name="Kaiser O."/>
            <person name="Martinez-Arias R."/>
        </authorList>
    </citation>
    <scope>NUCLEOTIDE SEQUENCE [LARGE SCALE GENOMIC DNA]</scope>
    <source>
        <strain>ATCC BAA-461 / DSM 12804 / CCUG 43448</strain>
    </source>
</reference>
<sequence>MANNDFLFTSESVSEGHPDKVADQISDAILDAIFTQDPNARVAAETLCNTGLVVLAGEITTTANVDYIQVARDTIRRIGYDNTDYGIDYKGCAVLVAYDKQSPDIAQGVDRKSEDYLNQGAGDQGLMFGYACDETPDLMPAPIWYAHRLVQRQSELRKDGRLPWLRPDAKSQVTFRYVDGRPVEVDTVVLSTQHAPEISQSAIHEAVIEDIIKPSFPEGLITPRTKFLVNPTGRFVIGGPQGDCGLTGRKIIVDTYGGACPHGGGAFSGKDPSKVDRSAAYAARYVAKNVVAAGLARQCQVQVSYAIGVAEPINITVYTEGTGVIPDEQIAKLVREHFDLRPKGIVNMLDLLRPIYAKTAAYGHFGRAEPEFSWEATDKALELKKSA</sequence>
<gene>
    <name evidence="1" type="primary">metK</name>
    <name type="ordered locus">Bpet4781</name>
</gene>
<dbReference type="EC" id="2.5.1.6" evidence="1"/>
<dbReference type="EMBL" id="AM902716">
    <property type="protein sequence ID" value="CAP45133.1"/>
    <property type="molecule type" value="Genomic_DNA"/>
</dbReference>
<dbReference type="SMR" id="A9IH21"/>
<dbReference type="STRING" id="94624.Bpet4781"/>
<dbReference type="KEGG" id="bpt:Bpet4781"/>
<dbReference type="eggNOG" id="COG0192">
    <property type="taxonomic scope" value="Bacteria"/>
</dbReference>
<dbReference type="UniPathway" id="UPA00315">
    <property type="reaction ID" value="UER00080"/>
</dbReference>
<dbReference type="Proteomes" id="UP000001225">
    <property type="component" value="Chromosome"/>
</dbReference>
<dbReference type="GO" id="GO:0005737">
    <property type="term" value="C:cytoplasm"/>
    <property type="evidence" value="ECO:0007669"/>
    <property type="project" value="UniProtKB-SubCell"/>
</dbReference>
<dbReference type="GO" id="GO:0005524">
    <property type="term" value="F:ATP binding"/>
    <property type="evidence" value="ECO:0007669"/>
    <property type="project" value="UniProtKB-UniRule"/>
</dbReference>
<dbReference type="GO" id="GO:0000287">
    <property type="term" value="F:magnesium ion binding"/>
    <property type="evidence" value="ECO:0007669"/>
    <property type="project" value="UniProtKB-UniRule"/>
</dbReference>
<dbReference type="GO" id="GO:0004478">
    <property type="term" value="F:methionine adenosyltransferase activity"/>
    <property type="evidence" value="ECO:0007669"/>
    <property type="project" value="UniProtKB-UniRule"/>
</dbReference>
<dbReference type="GO" id="GO:0006730">
    <property type="term" value="P:one-carbon metabolic process"/>
    <property type="evidence" value="ECO:0007669"/>
    <property type="project" value="UniProtKB-KW"/>
</dbReference>
<dbReference type="GO" id="GO:0006556">
    <property type="term" value="P:S-adenosylmethionine biosynthetic process"/>
    <property type="evidence" value="ECO:0007669"/>
    <property type="project" value="UniProtKB-UniRule"/>
</dbReference>
<dbReference type="CDD" id="cd18079">
    <property type="entry name" value="S-AdoMet_synt"/>
    <property type="match status" value="1"/>
</dbReference>
<dbReference type="FunFam" id="3.30.300.10:FF:000003">
    <property type="entry name" value="S-adenosylmethionine synthase"/>
    <property type="match status" value="1"/>
</dbReference>
<dbReference type="FunFam" id="3.30.300.10:FF:000004">
    <property type="entry name" value="S-adenosylmethionine synthase"/>
    <property type="match status" value="1"/>
</dbReference>
<dbReference type="Gene3D" id="3.30.300.10">
    <property type="match status" value="3"/>
</dbReference>
<dbReference type="HAMAP" id="MF_00086">
    <property type="entry name" value="S_AdoMet_synth1"/>
    <property type="match status" value="1"/>
</dbReference>
<dbReference type="InterPro" id="IPR022631">
    <property type="entry name" value="ADOMET_SYNTHASE_CS"/>
</dbReference>
<dbReference type="InterPro" id="IPR022630">
    <property type="entry name" value="S-AdoMet_synt_C"/>
</dbReference>
<dbReference type="InterPro" id="IPR022629">
    <property type="entry name" value="S-AdoMet_synt_central"/>
</dbReference>
<dbReference type="InterPro" id="IPR022628">
    <property type="entry name" value="S-AdoMet_synt_N"/>
</dbReference>
<dbReference type="InterPro" id="IPR002133">
    <property type="entry name" value="S-AdoMet_synthetase"/>
</dbReference>
<dbReference type="InterPro" id="IPR022636">
    <property type="entry name" value="S-AdoMet_synthetase_sfam"/>
</dbReference>
<dbReference type="NCBIfam" id="TIGR01034">
    <property type="entry name" value="metK"/>
    <property type="match status" value="1"/>
</dbReference>
<dbReference type="PANTHER" id="PTHR11964">
    <property type="entry name" value="S-ADENOSYLMETHIONINE SYNTHETASE"/>
    <property type="match status" value="1"/>
</dbReference>
<dbReference type="Pfam" id="PF02773">
    <property type="entry name" value="S-AdoMet_synt_C"/>
    <property type="match status" value="1"/>
</dbReference>
<dbReference type="Pfam" id="PF02772">
    <property type="entry name" value="S-AdoMet_synt_M"/>
    <property type="match status" value="1"/>
</dbReference>
<dbReference type="Pfam" id="PF00438">
    <property type="entry name" value="S-AdoMet_synt_N"/>
    <property type="match status" value="1"/>
</dbReference>
<dbReference type="PIRSF" id="PIRSF000497">
    <property type="entry name" value="MAT"/>
    <property type="match status" value="1"/>
</dbReference>
<dbReference type="SUPFAM" id="SSF55973">
    <property type="entry name" value="S-adenosylmethionine synthetase"/>
    <property type="match status" value="3"/>
</dbReference>
<dbReference type="PROSITE" id="PS00376">
    <property type="entry name" value="ADOMET_SYNTHASE_1"/>
    <property type="match status" value="1"/>
</dbReference>
<dbReference type="PROSITE" id="PS00377">
    <property type="entry name" value="ADOMET_SYNTHASE_2"/>
    <property type="match status" value="1"/>
</dbReference>
<feature type="chain" id="PRO_1000093027" description="S-adenosylmethionine synthase">
    <location>
        <begin position="1"/>
        <end position="387"/>
    </location>
</feature>
<feature type="region of interest" description="Flexible loop" evidence="1">
    <location>
        <begin position="101"/>
        <end position="111"/>
    </location>
</feature>
<feature type="binding site" description="in other chain" evidence="1">
    <location>
        <position position="17"/>
    </location>
    <ligand>
        <name>ATP</name>
        <dbReference type="ChEBI" id="CHEBI:30616"/>
        <note>ligand shared between two neighboring subunits</note>
    </ligand>
</feature>
<feature type="binding site" evidence="1">
    <location>
        <position position="19"/>
    </location>
    <ligand>
        <name>Mg(2+)</name>
        <dbReference type="ChEBI" id="CHEBI:18420"/>
    </ligand>
</feature>
<feature type="binding site" evidence="1">
    <location>
        <position position="45"/>
    </location>
    <ligand>
        <name>K(+)</name>
        <dbReference type="ChEBI" id="CHEBI:29103"/>
    </ligand>
</feature>
<feature type="binding site" description="in other chain" evidence="1">
    <location>
        <position position="58"/>
    </location>
    <ligand>
        <name>L-methionine</name>
        <dbReference type="ChEBI" id="CHEBI:57844"/>
        <note>ligand shared between two neighboring subunits</note>
    </ligand>
</feature>
<feature type="binding site" description="in other chain" evidence="1">
    <location>
        <position position="101"/>
    </location>
    <ligand>
        <name>L-methionine</name>
        <dbReference type="ChEBI" id="CHEBI:57844"/>
        <note>ligand shared between two neighboring subunits</note>
    </ligand>
</feature>
<feature type="binding site" description="in other chain" evidence="1">
    <location>
        <begin position="168"/>
        <end position="170"/>
    </location>
    <ligand>
        <name>ATP</name>
        <dbReference type="ChEBI" id="CHEBI:30616"/>
        <note>ligand shared between two neighboring subunits</note>
    </ligand>
</feature>
<feature type="binding site" description="in other chain" evidence="1">
    <location>
        <begin position="234"/>
        <end position="235"/>
    </location>
    <ligand>
        <name>ATP</name>
        <dbReference type="ChEBI" id="CHEBI:30616"/>
        <note>ligand shared between two neighboring subunits</note>
    </ligand>
</feature>
<feature type="binding site" evidence="1">
    <location>
        <position position="243"/>
    </location>
    <ligand>
        <name>ATP</name>
        <dbReference type="ChEBI" id="CHEBI:30616"/>
        <note>ligand shared between two neighboring subunits</note>
    </ligand>
</feature>
<feature type="binding site" evidence="1">
    <location>
        <position position="243"/>
    </location>
    <ligand>
        <name>L-methionine</name>
        <dbReference type="ChEBI" id="CHEBI:57844"/>
        <note>ligand shared between two neighboring subunits</note>
    </ligand>
</feature>
<feature type="binding site" description="in other chain" evidence="1">
    <location>
        <begin position="249"/>
        <end position="250"/>
    </location>
    <ligand>
        <name>ATP</name>
        <dbReference type="ChEBI" id="CHEBI:30616"/>
        <note>ligand shared between two neighboring subunits</note>
    </ligand>
</feature>
<feature type="binding site" evidence="1">
    <location>
        <position position="266"/>
    </location>
    <ligand>
        <name>ATP</name>
        <dbReference type="ChEBI" id="CHEBI:30616"/>
        <note>ligand shared between two neighboring subunits</note>
    </ligand>
</feature>
<feature type="binding site" evidence="1">
    <location>
        <position position="270"/>
    </location>
    <ligand>
        <name>ATP</name>
        <dbReference type="ChEBI" id="CHEBI:30616"/>
        <note>ligand shared between two neighboring subunits</note>
    </ligand>
</feature>
<feature type="binding site" description="in other chain" evidence="1">
    <location>
        <position position="274"/>
    </location>
    <ligand>
        <name>L-methionine</name>
        <dbReference type="ChEBI" id="CHEBI:57844"/>
        <note>ligand shared between two neighboring subunits</note>
    </ligand>
</feature>
<accession>A9IH21</accession>
<name>METK_BORPD</name>
<comment type="function">
    <text evidence="1">Catalyzes the formation of S-adenosylmethionine (AdoMet) from methionine and ATP. The overall synthetic reaction is composed of two sequential steps, AdoMet formation and the subsequent tripolyphosphate hydrolysis which occurs prior to release of AdoMet from the enzyme.</text>
</comment>
<comment type="catalytic activity">
    <reaction evidence="1">
        <text>L-methionine + ATP + H2O = S-adenosyl-L-methionine + phosphate + diphosphate</text>
        <dbReference type="Rhea" id="RHEA:21080"/>
        <dbReference type="ChEBI" id="CHEBI:15377"/>
        <dbReference type="ChEBI" id="CHEBI:30616"/>
        <dbReference type="ChEBI" id="CHEBI:33019"/>
        <dbReference type="ChEBI" id="CHEBI:43474"/>
        <dbReference type="ChEBI" id="CHEBI:57844"/>
        <dbReference type="ChEBI" id="CHEBI:59789"/>
        <dbReference type="EC" id="2.5.1.6"/>
    </reaction>
</comment>
<comment type="cofactor">
    <cofactor evidence="1">
        <name>Mg(2+)</name>
        <dbReference type="ChEBI" id="CHEBI:18420"/>
    </cofactor>
    <text evidence="1">Binds 2 divalent ions per subunit.</text>
</comment>
<comment type="cofactor">
    <cofactor evidence="1">
        <name>K(+)</name>
        <dbReference type="ChEBI" id="CHEBI:29103"/>
    </cofactor>
    <text evidence="1">Binds 1 potassium ion per subunit.</text>
</comment>
<comment type="pathway">
    <text evidence="1">Amino-acid biosynthesis; S-adenosyl-L-methionine biosynthesis; S-adenosyl-L-methionine from L-methionine: step 1/1.</text>
</comment>
<comment type="subunit">
    <text evidence="1">Homotetramer; dimer of dimers.</text>
</comment>
<comment type="subcellular location">
    <subcellularLocation>
        <location evidence="1">Cytoplasm</location>
    </subcellularLocation>
</comment>
<comment type="similarity">
    <text evidence="1">Belongs to the AdoMet synthase family.</text>
</comment>